<name>AKT5_ARATH</name>
<sequence length="880" mass="98504">MGIEKRKKMVWFWPEKHEGGVIKEAEDVAAEHISREGTMSHYSFSKGLLPPLGVGATARSSRHIKLRCFIVSPFDPRYRAWDWFLVILVLYTAWASPFEFGFLQTPRAPLSILDNVVNGFFAVDIVLTFFVAFLDKATYLLVDDPKRIAWRYTSTWLIFDVVSTVPYELFGSLLHNTIQGYGIFSMLRLWRLHRVSKCFARLEKDRKYNYFWIRCTKLLLVSLFVVHCGACFCYSIAAHYPDPSMTFMALAEANWKQKSLLIRYVTAMYWSITTFSTTGYGDIHGNNAEERAFILFYMIFNLGLLAYIIGNMTNLVVHVTSRTRNFRDTIQAASAFAQRNNLPLGLQEQMVAHLSLRYRTDSEGLQQQEIIDSLPKAIRSSISHYLFYEVVDKTYLFHGISNDLLFQLVSEMKAEYFPPKEDVILRNEAPSDFYIMVTGAVDIIARVNGVDQVVGEAQTGHVFGEVGVLCYRPQLFTVRTKRLSQLLRLNRTAFLNLVQANVGDGAIIMNNLLQHLKDSTDPVMKGILAETELMLAQGKMDLPLSLCFAAARGDDLLLHQLLKRGSNPNETDKNGRTALHIAASKGSQYCVVLLLEHGADPNIRDSEGSVPLWEAIIGRHEENAKLLSENGATLSFDTVGYFSCLAVGQNNLNALKDIVKYGGDISLSDVNGTTALHRAVSEGNLEIVQFLLEKGADMDKPDVYGWTARALAEHQGHEDIKALFYNQRPVERKTILVSGTPEIKPLMKHSSEPVMTHHHSREAMPPLARAVSQRRKLSNFKNSLFGIMSAAKTGDEGGASTRTGISEGVGGVYPARVTISGEASSSGKVVKLPDSLEELIEIGEKKLGFVATKILSREGAEIDDIRIIRDGDFLLLLKVS</sequence>
<organism>
    <name type="scientific">Arabidopsis thaliana</name>
    <name type="common">Mouse-ear cress</name>
    <dbReference type="NCBI Taxonomy" id="3702"/>
    <lineage>
        <taxon>Eukaryota</taxon>
        <taxon>Viridiplantae</taxon>
        <taxon>Streptophyta</taxon>
        <taxon>Embryophyta</taxon>
        <taxon>Tracheophyta</taxon>
        <taxon>Spermatophyta</taxon>
        <taxon>Magnoliopsida</taxon>
        <taxon>eudicotyledons</taxon>
        <taxon>Gunneridae</taxon>
        <taxon>Pentapetalae</taxon>
        <taxon>rosids</taxon>
        <taxon>malvids</taxon>
        <taxon>Brassicales</taxon>
        <taxon>Brassicaceae</taxon>
        <taxon>Camelineae</taxon>
        <taxon>Arabidopsis</taxon>
    </lineage>
</organism>
<gene>
    <name type="primary">AKT5</name>
    <name type="ordered locus">At4g32500</name>
    <name type="ORF">F8B4.200</name>
</gene>
<comment type="function">
    <text evidence="1">Probable potassium channel. May interact with the cytoskeleton or with regulatory proteins (By similarity).</text>
</comment>
<comment type="subunit">
    <text evidence="1">The potassium channel is probably composed of a homo- or heterotetrameric complex of pore-forming subunits.</text>
</comment>
<comment type="subcellular location">
    <subcellularLocation>
        <location>Membrane</location>
        <topology>Multi-pass membrane protein</topology>
    </subcellularLocation>
</comment>
<comment type="tissue specificity">
    <text evidence="4">Predominantly expressed in flowers.</text>
</comment>
<comment type="domain">
    <text>The segment S4 is probably the voltage-sensor and is characterized by a series of positively charged amino acids. The pore-forming region H5 is enclosed by the transmembrane segments S5 and S6 in the Shaker-type (1P/6TM) and contains the GYGD signature motif which seems to be involved in potassium selectivity.</text>
</comment>
<comment type="domain">
    <text>The KHA domain (rich in hydrophobic and acidic residues) present in the C-terminal part is likely to be important for tetramerization.</text>
</comment>
<comment type="similarity">
    <text evidence="5">Belongs to the potassium channel family. Plant (TC 1.A.1.4) subfamily.</text>
</comment>
<comment type="caution">
    <text evidence="6">Was originally erroneously termed AKT6.</text>
</comment>
<dbReference type="EMBL" id="AJ249479">
    <property type="protein sequence ID" value="CAB64728.1"/>
    <property type="molecule type" value="mRNA"/>
</dbReference>
<dbReference type="EMBL" id="AL034567">
    <property type="protein sequence ID" value="CAA22577.2"/>
    <property type="molecule type" value="Genomic_DNA"/>
</dbReference>
<dbReference type="EMBL" id="AL161581">
    <property type="protein sequence ID" value="CAB79967.1"/>
    <property type="molecule type" value="Genomic_DNA"/>
</dbReference>
<dbReference type="EMBL" id="CP002687">
    <property type="protein sequence ID" value="AEE86069.1"/>
    <property type="molecule type" value="Genomic_DNA"/>
</dbReference>
<dbReference type="PIR" id="F85381">
    <property type="entry name" value="F85381"/>
</dbReference>
<dbReference type="PIR" id="T05360">
    <property type="entry name" value="T05360"/>
</dbReference>
<dbReference type="RefSeq" id="NP_194976.1">
    <property type="nucleotide sequence ID" value="NM_119402.4"/>
</dbReference>
<dbReference type="SMR" id="Q9SCX5"/>
<dbReference type="BioGRID" id="14671">
    <property type="interactions" value="2"/>
</dbReference>
<dbReference type="FunCoup" id="Q9SCX5">
    <property type="interactions" value="73"/>
</dbReference>
<dbReference type="STRING" id="3702.Q9SCX5"/>
<dbReference type="iPTMnet" id="Q9SCX5"/>
<dbReference type="PaxDb" id="3702-AT4G32500.1"/>
<dbReference type="ProteomicsDB" id="244945"/>
<dbReference type="EnsemblPlants" id="AT4G32500.1">
    <property type="protein sequence ID" value="AT4G32500.1"/>
    <property type="gene ID" value="AT4G32500"/>
</dbReference>
<dbReference type="GeneID" id="829385"/>
<dbReference type="Gramene" id="AT4G32500.1">
    <property type="protein sequence ID" value="AT4G32500.1"/>
    <property type="gene ID" value="AT4G32500"/>
</dbReference>
<dbReference type="KEGG" id="ath:AT4G32500"/>
<dbReference type="Araport" id="AT4G32500"/>
<dbReference type="TAIR" id="AT4G32500">
    <property type="gene designation" value="KT5"/>
</dbReference>
<dbReference type="eggNOG" id="KOG0498">
    <property type="taxonomic scope" value="Eukaryota"/>
</dbReference>
<dbReference type="HOGENOM" id="CLU_005746_8_3_1"/>
<dbReference type="InParanoid" id="Q9SCX5"/>
<dbReference type="OMA" id="GVICYRP"/>
<dbReference type="OrthoDB" id="426293at2759"/>
<dbReference type="PhylomeDB" id="Q9SCX5"/>
<dbReference type="PRO" id="PR:Q9SCX5"/>
<dbReference type="Proteomes" id="UP000006548">
    <property type="component" value="Chromosome 4"/>
</dbReference>
<dbReference type="ExpressionAtlas" id="Q9SCX5">
    <property type="expression patterns" value="baseline and differential"/>
</dbReference>
<dbReference type="GO" id="GO:0034702">
    <property type="term" value="C:monoatomic ion channel complex"/>
    <property type="evidence" value="ECO:0007669"/>
    <property type="project" value="UniProtKB-KW"/>
</dbReference>
<dbReference type="GO" id="GO:0005249">
    <property type="term" value="F:voltage-gated potassium channel activity"/>
    <property type="evidence" value="ECO:0007669"/>
    <property type="project" value="InterPro"/>
</dbReference>
<dbReference type="CDD" id="cd00038">
    <property type="entry name" value="CAP_ED"/>
    <property type="match status" value="1"/>
</dbReference>
<dbReference type="FunFam" id="2.60.120.10:FF:000074">
    <property type="entry name" value="Potassium channel KAT2"/>
    <property type="match status" value="1"/>
</dbReference>
<dbReference type="FunFam" id="1.10.287.70:FF:000123">
    <property type="entry name" value="Potassium channel KAT3"/>
    <property type="match status" value="1"/>
</dbReference>
<dbReference type="Gene3D" id="1.10.287.70">
    <property type="match status" value="1"/>
</dbReference>
<dbReference type="Gene3D" id="1.25.40.20">
    <property type="entry name" value="Ankyrin repeat-containing domain"/>
    <property type="match status" value="1"/>
</dbReference>
<dbReference type="Gene3D" id="1.10.287.630">
    <property type="entry name" value="Helix hairpin bin"/>
    <property type="match status" value="1"/>
</dbReference>
<dbReference type="Gene3D" id="2.60.120.10">
    <property type="entry name" value="Jelly Rolls"/>
    <property type="match status" value="1"/>
</dbReference>
<dbReference type="InterPro" id="IPR002110">
    <property type="entry name" value="Ankyrin_rpt"/>
</dbReference>
<dbReference type="InterPro" id="IPR036770">
    <property type="entry name" value="Ankyrin_rpt-contain_sf"/>
</dbReference>
<dbReference type="InterPro" id="IPR000595">
    <property type="entry name" value="cNMP-bd_dom"/>
</dbReference>
<dbReference type="InterPro" id="IPR018490">
    <property type="entry name" value="cNMP-bd_dom_sf"/>
</dbReference>
<dbReference type="InterPro" id="IPR005821">
    <property type="entry name" value="Ion_trans_dom"/>
</dbReference>
<dbReference type="InterPro" id="IPR003938">
    <property type="entry name" value="K_chnl_volt-dep_EAG/ELK/ERG"/>
</dbReference>
<dbReference type="InterPro" id="IPR045319">
    <property type="entry name" value="KAT/AKT"/>
</dbReference>
<dbReference type="InterPro" id="IPR021789">
    <property type="entry name" value="KHA_dom"/>
</dbReference>
<dbReference type="InterPro" id="IPR014710">
    <property type="entry name" value="RmlC-like_jellyroll"/>
</dbReference>
<dbReference type="PANTHER" id="PTHR45743">
    <property type="entry name" value="POTASSIUM CHANNEL AKT1"/>
    <property type="match status" value="1"/>
</dbReference>
<dbReference type="PANTHER" id="PTHR45743:SF16">
    <property type="entry name" value="POTASSIUM CHANNEL AKT5-RELATED"/>
    <property type="match status" value="1"/>
</dbReference>
<dbReference type="Pfam" id="PF12796">
    <property type="entry name" value="Ank_2"/>
    <property type="match status" value="2"/>
</dbReference>
<dbReference type="Pfam" id="PF00027">
    <property type="entry name" value="cNMP_binding"/>
    <property type="match status" value="1"/>
</dbReference>
<dbReference type="Pfam" id="PF00520">
    <property type="entry name" value="Ion_trans"/>
    <property type="match status" value="1"/>
</dbReference>
<dbReference type="Pfam" id="PF11834">
    <property type="entry name" value="KHA"/>
    <property type="match status" value="1"/>
</dbReference>
<dbReference type="PRINTS" id="PR01415">
    <property type="entry name" value="ANKYRIN"/>
</dbReference>
<dbReference type="PRINTS" id="PR01463">
    <property type="entry name" value="EAGCHANLFMLY"/>
</dbReference>
<dbReference type="SMART" id="SM00248">
    <property type="entry name" value="ANK"/>
    <property type="match status" value="4"/>
</dbReference>
<dbReference type="SMART" id="SM00100">
    <property type="entry name" value="cNMP"/>
    <property type="match status" value="1"/>
</dbReference>
<dbReference type="SUPFAM" id="SSF48403">
    <property type="entry name" value="Ankyrin repeat"/>
    <property type="match status" value="1"/>
</dbReference>
<dbReference type="SUPFAM" id="SSF51206">
    <property type="entry name" value="cAMP-binding domain-like"/>
    <property type="match status" value="1"/>
</dbReference>
<dbReference type="SUPFAM" id="SSF81324">
    <property type="entry name" value="Voltage-gated potassium channels"/>
    <property type="match status" value="1"/>
</dbReference>
<dbReference type="PROSITE" id="PS50297">
    <property type="entry name" value="ANK_REP_REGION"/>
    <property type="match status" value="1"/>
</dbReference>
<dbReference type="PROSITE" id="PS50088">
    <property type="entry name" value="ANK_REPEAT"/>
    <property type="match status" value="2"/>
</dbReference>
<dbReference type="PROSITE" id="PS50042">
    <property type="entry name" value="CNMP_BINDING_3"/>
    <property type="match status" value="1"/>
</dbReference>
<dbReference type="PROSITE" id="PS51490">
    <property type="entry name" value="KHA"/>
    <property type="match status" value="1"/>
</dbReference>
<proteinExistence type="evidence at transcript level"/>
<evidence type="ECO:0000250" key="1"/>
<evidence type="ECO:0000255" key="2"/>
<evidence type="ECO:0000255" key="3">
    <source>
        <dbReference type="PROSITE-ProRule" id="PRU00823"/>
    </source>
</evidence>
<evidence type="ECO:0000269" key="4">
    <source>
    </source>
</evidence>
<evidence type="ECO:0000305" key="5"/>
<evidence type="ECO:0000305" key="6">
    <source>
    </source>
</evidence>
<accession>Q9SCX5</accession>
<accession>Q9SUU2</accession>
<keyword id="KW-0040">ANK repeat</keyword>
<keyword id="KW-0407">Ion channel</keyword>
<keyword id="KW-0406">Ion transport</keyword>
<keyword id="KW-0472">Membrane</keyword>
<keyword id="KW-0630">Potassium</keyword>
<keyword id="KW-0631">Potassium channel</keyword>
<keyword id="KW-0633">Potassium transport</keyword>
<keyword id="KW-1185">Reference proteome</keyword>
<keyword id="KW-0677">Repeat</keyword>
<keyword id="KW-0812">Transmembrane</keyword>
<keyword id="KW-1133">Transmembrane helix</keyword>
<keyword id="KW-0813">Transport</keyword>
<keyword id="KW-0851">Voltage-gated channel</keyword>
<protein>
    <recommendedName>
        <fullName>Probable potassium channel AKT5</fullName>
    </recommendedName>
</protein>
<feature type="chain" id="PRO_0000054123" description="Probable potassium channel AKT5">
    <location>
        <begin position="1"/>
        <end position="880"/>
    </location>
</feature>
<feature type="topological domain" description="Cytoplasmic" evidence="2">
    <location>
        <begin position="1"/>
        <end position="82"/>
    </location>
</feature>
<feature type="transmembrane region" description="Helical; Name=Segment S1" evidence="2">
    <location>
        <begin position="83"/>
        <end position="103"/>
    </location>
</feature>
<feature type="topological domain" description="Extracellular" evidence="2">
    <location>
        <begin position="104"/>
        <end position="111"/>
    </location>
</feature>
<feature type="transmembrane region" description="Helical; Name=Segment S2" evidence="2">
    <location>
        <begin position="112"/>
        <end position="132"/>
    </location>
</feature>
<feature type="topological domain" description="Cytoplasmic" evidence="2">
    <location>
        <begin position="133"/>
        <end position="153"/>
    </location>
</feature>
<feature type="transmembrane region" description="Helical; Name=Segment S3" evidence="2">
    <location>
        <begin position="154"/>
        <end position="174"/>
    </location>
</feature>
<feature type="topological domain" description="Extracellular" evidence="2">
    <location>
        <begin position="175"/>
        <end position="182"/>
    </location>
</feature>
<feature type="transmembrane region" description="Helical; Voltage-sensor; Name=Segment S4" evidence="2">
    <location>
        <begin position="183"/>
        <end position="203"/>
    </location>
</feature>
<feature type="topological domain" description="Cytoplasmic" evidence="2">
    <location>
        <begin position="204"/>
        <end position="217"/>
    </location>
</feature>
<feature type="transmembrane region" description="Helical; Name=Segment S5" evidence="2">
    <location>
        <begin position="218"/>
        <end position="238"/>
    </location>
</feature>
<feature type="topological domain" description="Extracellular" evidence="2">
    <location>
        <begin position="239"/>
        <end position="265"/>
    </location>
</feature>
<feature type="intramembrane region" description="Pore-forming; Name=Segment H5" evidence="2">
    <location>
        <begin position="266"/>
        <end position="285"/>
    </location>
</feature>
<feature type="topological domain" description="Extracellular" evidence="2">
    <location>
        <begin position="286"/>
        <end position="291"/>
    </location>
</feature>
<feature type="transmembrane region" description="Helical; Name=Segment S6" evidence="2">
    <location>
        <begin position="292"/>
        <end position="312"/>
    </location>
</feature>
<feature type="topological domain" description="Cytoplasmic" evidence="2">
    <location>
        <begin position="313"/>
        <end position="880"/>
    </location>
</feature>
<feature type="repeat" description="ANK 1">
    <location>
        <begin position="541"/>
        <end position="570"/>
    </location>
</feature>
<feature type="repeat" description="ANK 2">
    <location>
        <begin position="574"/>
        <end position="603"/>
    </location>
</feature>
<feature type="repeat" description="ANK 3">
    <location>
        <begin position="607"/>
        <end position="636"/>
    </location>
</feature>
<feature type="repeat" description="ANK 4">
    <location>
        <begin position="637"/>
        <end position="667"/>
    </location>
</feature>
<feature type="repeat" description="ANK 5">
    <location>
        <begin position="671"/>
        <end position="700"/>
    </location>
</feature>
<feature type="domain" description="KHA" evidence="3">
    <location>
        <begin position="809"/>
        <end position="880"/>
    </location>
</feature>
<feature type="binding site">
    <location>
        <begin position="396"/>
        <end position="517"/>
    </location>
    <ligand>
        <name>a nucleoside 3',5'-cyclic phosphate</name>
        <dbReference type="ChEBI" id="CHEBI:58464"/>
    </ligand>
</feature>
<feature type="sequence conflict" description="In Ref. 1; CAB64728." evidence="5" ref="1">
    <original>E</original>
    <variation>D</variation>
    <location>
        <position position="18"/>
    </location>
</feature>
<feature type="sequence conflict" description="In Ref. 1; CAB64728." evidence="5" ref="1">
    <original>V</original>
    <variation>F</variation>
    <location>
        <position position="126"/>
    </location>
</feature>
<reference key="1">
    <citation type="submission" date="1999-09" db="EMBL/GenBank/DDBJ databases">
        <authorList>
            <person name="Scheuermann S."/>
            <person name="Philippar K."/>
            <person name="Becker D."/>
            <person name="Hedrich R."/>
        </authorList>
    </citation>
    <scope>NUCLEOTIDE SEQUENCE [MRNA]</scope>
    <source>
        <strain>cv. Columbia</strain>
        <tissue>Hypocotyl</tissue>
    </source>
</reference>
<reference key="2">
    <citation type="journal article" date="1999" name="Nature">
        <title>Sequence and analysis of chromosome 4 of the plant Arabidopsis thaliana.</title>
        <authorList>
            <person name="Mayer K.F.X."/>
            <person name="Schueller C."/>
            <person name="Wambutt R."/>
            <person name="Murphy G."/>
            <person name="Volckaert G."/>
            <person name="Pohl T."/>
            <person name="Duesterhoeft A."/>
            <person name="Stiekema W."/>
            <person name="Entian K.-D."/>
            <person name="Terryn N."/>
            <person name="Harris B."/>
            <person name="Ansorge W."/>
            <person name="Brandt P."/>
            <person name="Grivell L.A."/>
            <person name="Rieger M."/>
            <person name="Weichselgartner M."/>
            <person name="de Simone V."/>
            <person name="Obermaier B."/>
            <person name="Mache R."/>
            <person name="Mueller M."/>
            <person name="Kreis M."/>
            <person name="Delseny M."/>
            <person name="Puigdomenech P."/>
            <person name="Watson M."/>
            <person name="Schmidtheini T."/>
            <person name="Reichert B."/>
            <person name="Portetelle D."/>
            <person name="Perez-Alonso M."/>
            <person name="Boutry M."/>
            <person name="Bancroft I."/>
            <person name="Vos P."/>
            <person name="Hoheisel J."/>
            <person name="Zimmermann W."/>
            <person name="Wedler H."/>
            <person name="Ridley P."/>
            <person name="Langham S.-A."/>
            <person name="McCullagh B."/>
            <person name="Bilham L."/>
            <person name="Robben J."/>
            <person name="van der Schueren J."/>
            <person name="Grymonprez B."/>
            <person name="Chuang Y.-J."/>
            <person name="Vandenbussche F."/>
            <person name="Braeken M."/>
            <person name="Weltjens I."/>
            <person name="Voet M."/>
            <person name="Bastiaens I."/>
            <person name="Aert R."/>
            <person name="Defoor E."/>
            <person name="Weitzenegger T."/>
            <person name="Bothe G."/>
            <person name="Ramsperger U."/>
            <person name="Hilbert H."/>
            <person name="Braun M."/>
            <person name="Holzer E."/>
            <person name="Brandt A."/>
            <person name="Peters S."/>
            <person name="van Staveren M."/>
            <person name="Dirkse W."/>
            <person name="Mooijman P."/>
            <person name="Klein Lankhorst R."/>
            <person name="Rose M."/>
            <person name="Hauf J."/>
            <person name="Koetter P."/>
            <person name="Berneiser S."/>
            <person name="Hempel S."/>
            <person name="Feldpausch M."/>
            <person name="Lamberth S."/>
            <person name="Van den Daele H."/>
            <person name="De Keyser A."/>
            <person name="Buysshaert C."/>
            <person name="Gielen J."/>
            <person name="Villarroel R."/>
            <person name="De Clercq R."/>
            <person name="van Montagu M."/>
            <person name="Rogers J."/>
            <person name="Cronin A."/>
            <person name="Quail M.A."/>
            <person name="Bray-Allen S."/>
            <person name="Clark L."/>
            <person name="Doggett J."/>
            <person name="Hall S."/>
            <person name="Kay M."/>
            <person name="Lennard N."/>
            <person name="McLay K."/>
            <person name="Mayes R."/>
            <person name="Pettett A."/>
            <person name="Rajandream M.A."/>
            <person name="Lyne M."/>
            <person name="Benes V."/>
            <person name="Rechmann S."/>
            <person name="Borkova D."/>
            <person name="Bloecker H."/>
            <person name="Scharfe M."/>
            <person name="Grimm M."/>
            <person name="Loehnert T.-H."/>
            <person name="Dose S."/>
            <person name="de Haan M."/>
            <person name="Maarse A.C."/>
            <person name="Schaefer M."/>
            <person name="Mueller-Auer S."/>
            <person name="Gabel C."/>
            <person name="Fuchs M."/>
            <person name="Fartmann B."/>
            <person name="Granderath K."/>
            <person name="Dauner D."/>
            <person name="Herzl A."/>
            <person name="Neumann S."/>
            <person name="Argiriou A."/>
            <person name="Vitale D."/>
            <person name="Liguori R."/>
            <person name="Piravandi E."/>
            <person name="Massenet O."/>
            <person name="Quigley F."/>
            <person name="Clabauld G."/>
            <person name="Muendlein A."/>
            <person name="Felber R."/>
            <person name="Schnabl S."/>
            <person name="Hiller R."/>
            <person name="Schmidt W."/>
            <person name="Lecharny A."/>
            <person name="Aubourg S."/>
            <person name="Chefdor F."/>
            <person name="Cooke R."/>
            <person name="Berger C."/>
            <person name="Monfort A."/>
            <person name="Casacuberta E."/>
            <person name="Gibbons T."/>
            <person name="Weber N."/>
            <person name="Vandenbol M."/>
            <person name="Bargues M."/>
            <person name="Terol J."/>
            <person name="Torres A."/>
            <person name="Perez-Perez A."/>
            <person name="Purnelle B."/>
            <person name="Bent E."/>
            <person name="Johnson S."/>
            <person name="Tacon D."/>
            <person name="Jesse T."/>
            <person name="Heijnen L."/>
            <person name="Schwarz S."/>
            <person name="Scholler P."/>
            <person name="Heber S."/>
            <person name="Francs P."/>
            <person name="Bielke C."/>
            <person name="Frishman D."/>
            <person name="Haase D."/>
            <person name="Lemcke K."/>
            <person name="Mewes H.-W."/>
            <person name="Stocker S."/>
            <person name="Zaccaria P."/>
            <person name="Bevan M."/>
            <person name="Wilson R.K."/>
            <person name="de la Bastide M."/>
            <person name="Habermann K."/>
            <person name="Parnell L."/>
            <person name="Dedhia N."/>
            <person name="Gnoj L."/>
            <person name="Schutz K."/>
            <person name="Huang E."/>
            <person name="Spiegel L."/>
            <person name="Sekhon M."/>
            <person name="Murray J."/>
            <person name="Sheet P."/>
            <person name="Cordes M."/>
            <person name="Abu-Threideh J."/>
            <person name="Stoneking T."/>
            <person name="Kalicki J."/>
            <person name="Graves T."/>
            <person name="Harmon G."/>
            <person name="Edwards J."/>
            <person name="Latreille P."/>
            <person name="Courtney L."/>
            <person name="Cloud J."/>
            <person name="Abbott A."/>
            <person name="Scott K."/>
            <person name="Johnson D."/>
            <person name="Minx P."/>
            <person name="Bentley D."/>
            <person name="Fulton B."/>
            <person name="Miller N."/>
            <person name="Greco T."/>
            <person name="Kemp K."/>
            <person name="Kramer J."/>
            <person name="Fulton L."/>
            <person name="Mardis E."/>
            <person name="Dante M."/>
            <person name="Pepin K."/>
            <person name="Hillier L.W."/>
            <person name="Nelson J."/>
            <person name="Spieth J."/>
            <person name="Ryan E."/>
            <person name="Andrews S."/>
            <person name="Geisel C."/>
            <person name="Layman D."/>
            <person name="Du H."/>
            <person name="Ali J."/>
            <person name="Berghoff A."/>
            <person name="Jones K."/>
            <person name="Drone K."/>
            <person name="Cotton M."/>
            <person name="Joshu C."/>
            <person name="Antonoiu B."/>
            <person name="Zidanic M."/>
            <person name="Strong C."/>
            <person name="Sun H."/>
            <person name="Lamar B."/>
            <person name="Yordan C."/>
            <person name="Ma P."/>
            <person name="Zhong J."/>
            <person name="Preston R."/>
            <person name="Vil D."/>
            <person name="Shekher M."/>
            <person name="Matero A."/>
            <person name="Shah R."/>
            <person name="Swaby I.K."/>
            <person name="O'Shaughnessy A."/>
            <person name="Rodriguez M."/>
            <person name="Hoffman J."/>
            <person name="Till S."/>
            <person name="Granat S."/>
            <person name="Shohdy N."/>
            <person name="Hasegawa A."/>
            <person name="Hameed A."/>
            <person name="Lodhi M."/>
            <person name="Johnson A."/>
            <person name="Chen E."/>
            <person name="Marra M.A."/>
            <person name="Martienssen R."/>
            <person name="McCombie W.R."/>
        </authorList>
    </citation>
    <scope>NUCLEOTIDE SEQUENCE [LARGE SCALE GENOMIC DNA]</scope>
    <source>
        <strain>cv. Columbia</strain>
    </source>
</reference>
<reference key="3">
    <citation type="journal article" date="2017" name="Plant J.">
        <title>Araport11: a complete reannotation of the Arabidopsis thaliana reference genome.</title>
        <authorList>
            <person name="Cheng C.Y."/>
            <person name="Krishnakumar V."/>
            <person name="Chan A.P."/>
            <person name="Thibaud-Nissen F."/>
            <person name="Schobel S."/>
            <person name="Town C.D."/>
        </authorList>
    </citation>
    <scope>GENOME REANNOTATION</scope>
    <source>
        <strain>cv. Columbia</strain>
    </source>
</reference>
<reference key="4">
    <citation type="journal article" date="2000" name="Plant Cell">
        <title>A shaker-like K(+) channel with weak rectification is expressed in both source and sink phloem tissues of Arabidopsis.</title>
        <authorList>
            <person name="Lacombe B."/>
            <person name="Pilot G."/>
            <person name="Michard E."/>
            <person name="Gaymard F."/>
            <person name="Sentenac H."/>
            <person name="Thibaud J.-B."/>
        </authorList>
    </citation>
    <scope>TISSUE SPECIFICITY</scope>
</reference>
<reference key="5">
    <citation type="journal article" date="2001" name="Plant Physiol.">
        <title>Phylogenetic relationships within cation transporter families of Arabidopsis.</title>
        <authorList>
            <person name="Maeser P."/>
            <person name="Thomine S."/>
            <person name="Schroeder J.I."/>
            <person name="Ward J.M."/>
            <person name="Hirschi K."/>
            <person name="Sze H."/>
            <person name="Talke I.N."/>
            <person name="Amtmann A."/>
            <person name="Maathuis F.J.M."/>
            <person name="Sanders D."/>
            <person name="Harper J.F."/>
            <person name="Tchieu J."/>
            <person name="Gribskov M."/>
            <person name="Persans M.W."/>
            <person name="Salt D.E."/>
            <person name="Kim S.A."/>
            <person name="Guerinot M.L."/>
        </authorList>
    </citation>
    <scope>GENE FAMILY</scope>
    <scope>NOMENCLATURE</scope>
</reference>